<gene>
    <name evidence="1" type="primary">rpmC</name>
    <name type="ordered locus">Shewana3_0207</name>
</gene>
<sequence length="63" mass="7170">MKASELREKSVEELNAELLGLLREQFNLRMQHATGQLTQTHQLKLVRRNIARVKTIITSKAGA</sequence>
<name>RL29_SHESA</name>
<accession>A0KRN2</accession>
<organism>
    <name type="scientific">Shewanella sp. (strain ANA-3)</name>
    <dbReference type="NCBI Taxonomy" id="94122"/>
    <lineage>
        <taxon>Bacteria</taxon>
        <taxon>Pseudomonadati</taxon>
        <taxon>Pseudomonadota</taxon>
        <taxon>Gammaproteobacteria</taxon>
        <taxon>Alteromonadales</taxon>
        <taxon>Shewanellaceae</taxon>
        <taxon>Shewanella</taxon>
    </lineage>
</organism>
<keyword id="KW-0687">Ribonucleoprotein</keyword>
<keyword id="KW-0689">Ribosomal protein</keyword>
<protein>
    <recommendedName>
        <fullName evidence="1">Large ribosomal subunit protein uL29</fullName>
    </recommendedName>
    <alternativeName>
        <fullName evidence="2">50S ribosomal protein L29</fullName>
    </alternativeName>
</protein>
<feature type="chain" id="PRO_1000007602" description="Large ribosomal subunit protein uL29">
    <location>
        <begin position="1"/>
        <end position="63"/>
    </location>
</feature>
<reference key="1">
    <citation type="submission" date="2006-09" db="EMBL/GenBank/DDBJ databases">
        <title>Complete sequence of chromosome 1 of Shewanella sp. ANA-3.</title>
        <authorList>
            <person name="Copeland A."/>
            <person name="Lucas S."/>
            <person name="Lapidus A."/>
            <person name="Barry K."/>
            <person name="Detter J.C."/>
            <person name="Glavina del Rio T."/>
            <person name="Hammon N."/>
            <person name="Israni S."/>
            <person name="Dalin E."/>
            <person name="Tice H."/>
            <person name="Pitluck S."/>
            <person name="Chertkov O."/>
            <person name="Brettin T."/>
            <person name="Bruce D."/>
            <person name="Han C."/>
            <person name="Tapia R."/>
            <person name="Gilna P."/>
            <person name="Schmutz J."/>
            <person name="Larimer F."/>
            <person name="Land M."/>
            <person name="Hauser L."/>
            <person name="Kyrpides N."/>
            <person name="Kim E."/>
            <person name="Newman D."/>
            <person name="Salticov C."/>
            <person name="Konstantinidis K."/>
            <person name="Klappenback J."/>
            <person name="Tiedje J."/>
            <person name="Richardson P."/>
        </authorList>
    </citation>
    <scope>NUCLEOTIDE SEQUENCE [LARGE SCALE GENOMIC DNA]</scope>
    <source>
        <strain>ANA-3</strain>
    </source>
</reference>
<proteinExistence type="inferred from homology"/>
<dbReference type="EMBL" id="CP000469">
    <property type="protein sequence ID" value="ABK46451.1"/>
    <property type="molecule type" value="Genomic_DNA"/>
</dbReference>
<dbReference type="RefSeq" id="WP_007644429.1">
    <property type="nucleotide sequence ID" value="NC_008577.1"/>
</dbReference>
<dbReference type="SMR" id="A0KRN2"/>
<dbReference type="STRING" id="94122.Shewana3_0207"/>
<dbReference type="GeneID" id="94726194"/>
<dbReference type="KEGG" id="shn:Shewana3_0207"/>
<dbReference type="eggNOG" id="COG0255">
    <property type="taxonomic scope" value="Bacteria"/>
</dbReference>
<dbReference type="HOGENOM" id="CLU_158491_1_2_6"/>
<dbReference type="OrthoDB" id="9815192at2"/>
<dbReference type="Proteomes" id="UP000002589">
    <property type="component" value="Chromosome"/>
</dbReference>
<dbReference type="GO" id="GO:0022625">
    <property type="term" value="C:cytosolic large ribosomal subunit"/>
    <property type="evidence" value="ECO:0007669"/>
    <property type="project" value="TreeGrafter"/>
</dbReference>
<dbReference type="GO" id="GO:0003735">
    <property type="term" value="F:structural constituent of ribosome"/>
    <property type="evidence" value="ECO:0007669"/>
    <property type="project" value="InterPro"/>
</dbReference>
<dbReference type="GO" id="GO:0006412">
    <property type="term" value="P:translation"/>
    <property type="evidence" value="ECO:0007669"/>
    <property type="project" value="UniProtKB-UniRule"/>
</dbReference>
<dbReference type="CDD" id="cd00427">
    <property type="entry name" value="Ribosomal_L29_HIP"/>
    <property type="match status" value="1"/>
</dbReference>
<dbReference type="FunFam" id="1.10.287.310:FF:000001">
    <property type="entry name" value="50S ribosomal protein L29"/>
    <property type="match status" value="1"/>
</dbReference>
<dbReference type="Gene3D" id="1.10.287.310">
    <property type="match status" value="1"/>
</dbReference>
<dbReference type="HAMAP" id="MF_00374">
    <property type="entry name" value="Ribosomal_uL29"/>
    <property type="match status" value="1"/>
</dbReference>
<dbReference type="InterPro" id="IPR050063">
    <property type="entry name" value="Ribosomal_protein_uL29"/>
</dbReference>
<dbReference type="InterPro" id="IPR001854">
    <property type="entry name" value="Ribosomal_uL29"/>
</dbReference>
<dbReference type="InterPro" id="IPR018254">
    <property type="entry name" value="Ribosomal_uL29_CS"/>
</dbReference>
<dbReference type="InterPro" id="IPR036049">
    <property type="entry name" value="Ribosomal_uL29_sf"/>
</dbReference>
<dbReference type="NCBIfam" id="TIGR00012">
    <property type="entry name" value="L29"/>
    <property type="match status" value="1"/>
</dbReference>
<dbReference type="PANTHER" id="PTHR10916">
    <property type="entry name" value="60S RIBOSOMAL PROTEIN L35/50S RIBOSOMAL PROTEIN L29"/>
    <property type="match status" value="1"/>
</dbReference>
<dbReference type="PANTHER" id="PTHR10916:SF0">
    <property type="entry name" value="LARGE RIBOSOMAL SUBUNIT PROTEIN UL29C"/>
    <property type="match status" value="1"/>
</dbReference>
<dbReference type="Pfam" id="PF00831">
    <property type="entry name" value="Ribosomal_L29"/>
    <property type="match status" value="1"/>
</dbReference>
<dbReference type="SUPFAM" id="SSF46561">
    <property type="entry name" value="Ribosomal protein L29 (L29p)"/>
    <property type="match status" value="1"/>
</dbReference>
<dbReference type="PROSITE" id="PS00579">
    <property type="entry name" value="RIBOSOMAL_L29"/>
    <property type="match status" value="1"/>
</dbReference>
<comment type="similarity">
    <text evidence="1">Belongs to the universal ribosomal protein uL29 family.</text>
</comment>
<evidence type="ECO:0000255" key="1">
    <source>
        <dbReference type="HAMAP-Rule" id="MF_00374"/>
    </source>
</evidence>
<evidence type="ECO:0000305" key="2"/>